<accession>Q7A2D6</accession>
<sequence>MRDAVTSLIKNYDVAGRYFDRNAIDTLKDYFDSGTARVQAAAAINSNAAALVKQAGSKLFEELPELIRPGGNAYTTRRLAACLRDMDYYLRYATYALVAGNTNVLDERVLQGLRETYNSLGVPIGPTVRGVQILKDLVKEQVAGAGIANTTFVEEPFDHITRELSERDV</sequence>
<name>APCF_NOSS1</name>
<organism>
    <name type="scientific">Nostoc sp. (strain PCC 7120 / SAG 25.82 / UTEX 2576)</name>
    <dbReference type="NCBI Taxonomy" id="103690"/>
    <lineage>
        <taxon>Bacteria</taxon>
        <taxon>Bacillati</taxon>
        <taxon>Cyanobacteriota</taxon>
        <taxon>Cyanophyceae</taxon>
        <taxon>Nostocales</taxon>
        <taxon>Nostocaceae</taxon>
        <taxon>Nostoc</taxon>
    </lineage>
</organism>
<protein>
    <recommendedName>
        <fullName>Allophycocyanin subunit beta-18</fullName>
        <shortName>Allophycocyanin subunit B18</shortName>
    </recommendedName>
</protein>
<keyword id="KW-0002">3D-structure</keyword>
<keyword id="KW-0042">Antenna complex</keyword>
<keyword id="KW-0089">Bile pigment</keyword>
<keyword id="KW-0157">Chromophore</keyword>
<keyword id="KW-0249">Electron transport</keyword>
<keyword id="KW-0472">Membrane</keyword>
<keyword id="KW-0488">Methylation</keyword>
<keyword id="KW-0602">Photosynthesis</keyword>
<keyword id="KW-0605">Phycobilisome</keyword>
<keyword id="KW-1185">Reference proteome</keyword>
<keyword id="KW-0793">Thylakoid</keyword>
<keyword id="KW-0813">Transport</keyword>
<gene>
    <name type="primary">apcF</name>
    <name type="ordered locus">all2327</name>
</gene>
<dbReference type="EMBL" id="BA000019">
    <property type="protein sequence ID" value="BAB74026.1"/>
    <property type="molecule type" value="Genomic_DNA"/>
</dbReference>
<dbReference type="PDB" id="7EYD">
    <property type="method" value="EM"/>
    <property type="resolution" value="3.90 A"/>
    <property type="chains" value="Q9/g9=1-169"/>
</dbReference>
<dbReference type="PDBsum" id="7EYD"/>
<dbReference type="SMR" id="Q7A2D6"/>
<dbReference type="STRING" id="103690.gene:10494356"/>
<dbReference type="KEGG" id="ana:all2327"/>
<dbReference type="eggNOG" id="ENOG502Z8IM">
    <property type="taxonomic scope" value="Bacteria"/>
</dbReference>
<dbReference type="OrthoDB" id="512145at2"/>
<dbReference type="Proteomes" id="UP000002483">
    <property type="component" value="Chromosome"/>
</dbReference>
<dbReference type="GO" id="GO:0030089">
    <property type="term" value="C:phycobilisome"/>
    <property type="evidence" value="ECO:0007669"/>
    <property type="project" value="UniProtKB-KW"/>
</dbReference>
<dbReference type="GO" id="GO:0031676">
    <property type="term" value="C:plasma membrane-derived thylakoid membrane"/>
    <property type="evidence" value="ECO:0007669"/>
    <property type="project" value="UniProtKB-SubCell"/>
</dbReference>
<dbReference type="GO" id="GO:0015979">
    <property type="term" value="P:photosynthesis"/>
    <property type="evidence" value="ECO:0007669"/>
    <property type="project" value="UniProtKB-KW"/>
</dbReference>
<dbReference type="CDD" id="cd12126">
    <property type="entry name" value="APC_beta"/>
    <property type="match status" value="1"/>
</dbReference>
<dbReference type="Gene3D" id="1.10.490.20">
    <property type="entry name" value="Phycocyanins"/>
    <property type="match status" value="1"/>
</dbReference>
<dbReference type="InterPro" id="IPR006245">
    <property type="entry name" value="Allophycocyanin_b"/>
</dbReference>
<dbReference type="InterPro" id="IPR009050">
    <property type="entry name" value="Globin-like_sf"/>
</dbReference>
<dbReference type="InterPro" id="IPR012128">
    <property type="entry name" value="Phycobilisome_asu/bsu"/>
</dbReference>
<dbReference type="InterPro" id="IPR038719">
    <property type="entry name" value="Phycobilisome_asu/bsu_sf"/>
</dbReference>
<dbReference type="NCBIfam" id="TIGR01337">
    <property type="entry name" value="apcB"/>
    <property type="match status" value="1"/>
</dbReference>
<dbReference type="PANTHER" id="PTHR34011:SF3">
    <property type="entry name" value="ALLOPHYCOCYANIN BETA CHAIN"/>
    <property type="match status" value="1"/>
</dbReference>
<dbReference type="PANTHER" id="PTHR34011">
    <property type="entry name" value="PHYCOBILISOME 32.1 KDA LINKER POLYPEPTIDE, PHYCOCYANIN-ASSOCIATED, ROD 2-RELATED"/>
    <property type="match status" value="1"/>
</dbReference>
<dbReference type="Pfam" id="PF00502">
    <property type="entry name" value="Phycobilisome"/>
    <property type="match status" value="1"/>
</dbReference>
<dbReference type="PIRSF" id="PIRSF000081">
    <property type="entry name" value="Phycocyanin"/>
    <property type="match status" value="1"/>
</dbReference>
<dbReference type="SUPFAM" id="SSF46458">
    <property type="entry name" value="Globin-like"/>
    <property type="match status" value="1"/>
</dbReference>
<reference key="1">
    <citation type="journal article" date="2001" name="DNA Res.">
        <title>Complete genomic sequence of the filamentous nitrogen-fixing cyanobacterium Anabaena sp. strain PCC 7120.</title>
        <authorList>
            <person name="Kaneko T."/>
            <person name="Nakamura Y."/>
            <person name="Wolk C.P."/>
            <person name="Kuritz T."/>
            <person name="Sasamoto S."/>
            <person name="Watanabe A."/>
            <person name="Iriguchi M."/>
            <person name="Ishikawa A."/>
            <person name="Kawashima K."/>
            <person name="Kimura T."/>
            <person name="Kishida Y."/>
            <person name="Kohara M."/>
            <person name="Matsumoto M."/>
            <person name="Matsuno A."/>
            <person name="Muraki A."/>
            <person name="Nakazaki N."/>
            <person name="Shimpo S."/>
            <person name="Sugimoto M."/>
            <person name="Takazawa M."/>
            <person name="Yamada M."/>
            <person name="Yasuda M."/>
            <person name="Tabata S."/>
        </authorList>
    </citation>
    <scope>NUCLEOTIDE SEQUENCE [LARGE SCALE GENOMIC DNA]</scope>
    <source>
        <strain>PCC 7120 / SAG 25.82 / UTEX 2576</strain>
    </source>
</reference>
<reference key="2">
    <citation type="journal article" date="2007" name="Proc. Natl. Acad. Sci. U.S.A.">
        <title>Phycobilin:cystein-84 biliprotein lyase, a near-universal lyase for cysteine-84-binding sites in cyanobacterial phycobiliproteins.</title>
        <authorList>
            <person name="Zhao K.H."/>
            <person name="Su P."/>
            <person name="Tu J.M."/>
            <person name="Wang X."/>
            <person name="Liu H."/>
            <person name="Ploscher M."/>
            <person name="Eichacker L."/>
            <person name="Yang B."/>
            <person name="Zhou M."/>
            <person name="Scheer H."/>
        </authorList>
    </citation>
    <scope>CHROMOPHORE ATTACHMENT AT CYS-82</scope>
    <source>
        <strain>PCC 7120 / SAG 25.82 / UTEX 2576</strain>
    </source>
</reference>
<feature type="chain" id="PRO_0000403178" description="Allophycocyanin subunit beta-18">
    <location>
        <begin position="1"/>
        <end position="169"/>
    </location>
</feature>
<feature type="binding site" description="covalent" evidence="2">
    <location>
        <position position="82"/>
    </location>
    <ligand>
        <name>(2R,3E)-phycocyanobilin</name>
        <dbReference type="ChEBI" id="CHEBI:85275"/>
    </ligand>
</feature>
<feature type="modified residue" description="N4-methylasparagine" evidence="1">
    <location>
        <position position="72"/>
    </location>
</feature>
<comment type="function">
    <text evidence="1">A variant beta-allophycocyanin (AP) which forms a complex with ApcE, a phycobilisome terminal emitter that influences energy transfer to photosystem II.</text>
</comment>
<comment type="subunit">
    <text evidence="1">Heterodimer of ApcE and this beta chain.</text>
</comment>
<comment type="subcellular location">
    <subcellularLocation>
        <location>Cellular thylakoid membrane</location>
        <topology>Peripheral membrane protein</topology>
        <orientation>Cytoplasmic side</orientation>
    </subcellularLocation>
    <text evidence="1">A minor component of the phycobilisome core.</text>
</comment>
<comment type="PTM">
    <text evidence="1">Contains one covalently linked bilin chromophore (By similarity). The chromophore is added by phycocyanobilin lyase CpcS 1.</text>
</comment>
<comment type="similarity">
    <text evidence="2">Belongs to the phycobiliprotein family.</text>
</comment>
<evidence type="ECO:0000250" key="1"/>
<evidence type="ECO:0000305" key="2"/>
<proteinExistence type="evidence at protein level"/>